<protein>
    <recommendedName>
        <fullName>Putative amidase AmiB2</fullName>
        <ecNumber>3.5.1.4</ecNumber>
    </recommendedName>
</protein>
<proteinExistence type="inferred from homology"/>
<feature type="chain" id="PRO_0000105256" description="Putative amidase AmiB2">
    <location>
        <begin position="1"/>
        <end position="462"/>
    </location>
</feature>
<feature type="active site" description="Charge relay system" evidence="1">
    <location>
        <position position="81"/>
    </location>
</feature>
<feature type="active site" description="Charge relay system" evidence="1">
    <location>
        <position position="155"/>
    </location>
</feature>
<feature type="active site" description="Acyl-ester intermediate" evidence="1">
    <location>
        <position position="179"/>
    </location>
</feature>
<name>AMIB2_MYCBO</name>
<keyword id="KW-0378">Hydrolase</keyword>
<keyword id="KW-1185">Reference proteome</keyword>
<dbReference type="EC" id="3.5.1.4"/>
<dbReference type="EMBL" id="LT708304">
    <property type="protein sequence ID" value="SIT99895.1"/>
    <property type="molecule type" value="Genomic_DNA"/>
</dbReference>
<dbReference type="RefSeq" id="NP_854948.1">
    <property type="nucleotide sequence ID" value="NC_002945.3"/>
</dbReference>
<dbReference type="RefSeq" id="WP_003406369.1">
    <property type="nucleotide sequence ID" value="NC_002945.4"/>
</dbReference>
<dbReference type="SMR" id="P63493"/>
<dbReference type="KEGG" id="mbo:BQ2027_MB1294"/>
<dbReference type="PATRIC" id="fig|233413.5.peg.1419"/>
<dbReference type="Proteomes" id="UP000001419">
    <property type="component" value="Chromosome"/>
</dbReference>
<dbReference type="GO" id="GO:0004040">
    <property type="term" value="F:amidase activity"/>
    <property type="evidence" value="ECO:0007669"/>
    <property type="project" value="UniProtKB-EC"/>
</dbReference>
<dbReference type="Gene3D" id="3.90.1300.10">
    <property type="entry name" value="Amidase signature (AS) domain"/>
    <property type="match status" value="1"/>
</dbReference>
<dbReference type="InterPro" id="IPR000120">
    <property type="entry name" value="Amidase"/>
</dbReference>
<dbReference type="InterPro" id="IPR020556">
    <property type="entry name" value="Amidase_CS"/>
</dbReference>
<dbReference type="InterPro" id="IPR023631">
    <property type="entry name" value="Amidase_dom"/>
</dbReference>
<dbReference type="InterPro" id="IPR036928">
    <property type="entry name" value="AS_sf"/>
</dbReference>
<dbReference type="NCBIfam" id="NF009119">
    <property type="entry name" value="PRK12470.1"/>
    <property type="match status" value="1"/>
</dbReference>
<dbReference type="PANTHER" id="PTHR11895:SF7">
    <property type="entry name" value="GLUTAMYL-TRNA(GLN) AMIDOTRANSFERASE SUBUNIT A, MITOCHONDRIAL"/>
    <property type="match status" value="1"/>
</dbReference>
<dbReference type="PANTHER" id="PTHR11895">
    <property type="entry name" value="TRANSAMIDASE"/>
    <property type="match status" value="1"/>
</dbReference>
<dbReference type="Pfam" id="PF01425">
    <property type="entry name" value="Amidase"/>
    <property type="match status" value="1"/>
</dbReference>
<dbReference type="SUPFAM" id="SSF75304">
    <property type="entry name" value="Amidase signature (AS) enzymes"/>
    <property type="match status" value="1"/>
</dbReference>
<dbReference type="PROSITE" id="PS00571">
    <property type="entry name" value="AMIDASES"/>
    <property type="match status" value="1"/>
</dbReference>
<sequence length="462" mass="49081">MDPTDLAFAGAAAQARMLADGALTAPMLLEVYLQRIERLDSHLRAYRVVQFDRARAEAEAAQQRLDAGERLPLLGVPIAIKDDVDIAGEVTTYGSAGHGPAATSDAEVVRRLRAAGAVIIGKTNVPELMIMPFTESLAFGATRNPWCLNRTPGGSSGGSAAAVAAGLAPVALGSDGGGSIRIPCTWCGLFGLKPQRDRISLEPHDGAWQGLSVNGPIARSVMDAALLLDATTTVPGPEGEFVAAAARQPGRLRIALSTRVPTPLPVRCGKQELAAVHQAGALLRDLGHDVVVRDPDYPASTYANYLPRFFRGISDDADAQAHPDRLEARTRAIARLGSFFSDRRMAALRAAEVVLSSRIQSIFDDVDVVVTPGAATGPSRIGAYQRRGAVSTLLLVVQRVPYFQVWNLTGQPAAVVPWDFDGDGLPMSVQLVGRPYDEATLLALAAQIESARPWAHRRPSVS</sequence>
<comment type="catalytic activity">
    <reaction>
        <text>a monocarboxylic acid amide + H2O = a monocarboxylate + NH4(+)</text>
        <dbReference type="Rhea" id="RHEA:12020"/>
        <dbReference type="ChEBI" id="CHEBI:15377"/>
        <dbReference type="ChEBI" id="CHEBI:28938"/>
        <dbReference type="ChEBI" id="CHEBI:35757"/>
        <dbReference type="ChEBI" id="CHEBI:83628"/>
        <dbReference type="EC" id="3.5.1.4"/>
    </reaction>
</comment>
<comment type="similarity">
    <text evidence="2">Belongs to the amidase family.</text>
</comment>
<organism>
    <name type="scientific">Mycobacterium bovis (strain ATCC BAA-935 / AF2122/97)</name>
    <dbReference type="NCBI Taxonomy" id="233413"/>
    <lineage>
        <taxon>Bacteria</taxon>
        <taxon>Bacillati</taxon>
        <taxon>Actinomycetota</taxon>
        <taxon>Actinomycetes</taxon>
        <taxon>Mycobacteriales</taxon>
        <taxon>Mycobacteriaceae</taxon>
        <taxon>Mycobacterium</taxon>
        <taxon>Mycobacterium tuberculosis complex</taxon>
    </lineage>
</organism>
<gene>
    <name type="primary">amiB2</name>
    <name type="ordered locus">BQ2027_MB1294</name>
</gene>
<reference key="1">
    <citation type="journal article" date="2003" name="Proc. Natl. Acad. Sci. U.S.A.">
        <title>The complete genome sequence of Mycobacterium bovis.</title>
        <authorList>
            <person name="Garnier T."/>
            <person name="Eiglmeier K."/>
            <person name="Camus J.-C."/>
            <person name="Medina N."/>
            <person name="Mansoor H."/>
            <person name="Pryor M."/>
            <person name="Duthoy S."/>
            <person name="Grondin S."/>
            <person name="Lacroix C."/>
            <person name="Monsempe C."/>
            <person name="Simon S."/>
            <person name="Harris B."/>
            <person name="Atkin R."/>
            <person name="Doggett J."/>
            <person name="Mayes R."/>
            <person name="Keating L."/>
            <person name="Wheeler P.R."/>
            <person name="Parkhill J."/>
            <person name="Barrell B.G."/>
            <person name="Cole S.T."/>
            <person name="Gordon S.V."/>
            <person name="Hewinson R.G."/>
        </authorList>
    </citation>
    <scope>NUCLEOTIDE SEQUENCE [LARGE SCALE GENOMIC DNA]</scope>
    <source>
        <strain>ATCC BAA-935 / AF2122/97</strain>
    </source>
</reference>
<reference key="2">
    <citation type="journal article" date="2017" name="Genome Announc.">
        <title>Updated reference genome sequence and annotation of Mycobacterium bovis AF2122/97.</title>
        <authorList>
            <person name="Malone K.M."/>
            <person name="Farrell D."/>
            <person name="Stuber T.P."/>
            <person name="Schubert O.T."/>
            <person name="Aebersold R."/>
            <person name="Robbe-Austerman S."/>
            <person name="Gordon S.V."/>
        </authorList>
    </citation>
    <scope>NUCLEOTIDE SEQUENCE [LARGE SCALE GENOMIC DNA]</scope>
    <scope>GENOME REANNOTATION</scope>
    <source>
        <strain>ATCC BAA-935 / AF2122/97</strain>
    </source>
</reference>
<accession>P63493</accession>
<accession>A0A1R3XY58</accession>
<accession>Q11056</accession>
<accession>X2BHG8</accession>
<evidence type="ECO:0000250" key="1"/>
<evidence type="ECO:0000305" key="2"/>